<proteinExistence type="predicted"/>
<name>YH2B_SCHPO</name>
<reference key="1">
    <citation type="journal article" date="2002" name="Nature">
        <title>The genome sequence of Schizosaccharomyces pombe.</title>
        <authorList>
            <person name="Wood V."/>
            <person name="Gwilliam R."/>
            <person name="Rajandream M.A."/>
            <person name="Lyne M.H."/>
            <person name="Lyne R."/>
            <person name="Stewart A."/>
            <person name="Sgouros J.G."/>
            <person name="Peat N."/>
            <person name="Hayles J."/>
            <person name="Baker S.G."/>
            <person name="Basham D."/>
            <person name="Bowman S."/>
            <person name="Brooks K."/>
            <person name="Brown D."/>
            <person name="Brown S."/>
            <person name="Chillingworth T."/>
            <person name="Churcher C.M."/>
            <person name="Collins M."/>
            <person name="Connor R."/>
            <person name="Cronin A."/>
            <person name="Davis P."/>
            <person name="Feltwell T."/>
            <person name="Fraser A."/>
            <person name="Gentles S."/>
            <person name="Goble A."/>
            <person name="Hamlin N."/>
            <person name="Harris D.E."/>
            <person name="Hidalgo J."/>
            <person name="Hodgson G."/>
            <person name="Holroyd S."/>
            <person name="Hornsby T."/>
            <person name="Howarth S."/>
            <person name="Huckle E.J."/>
            <person name="Hunt S."/>
            <person name="Jagels K."/>
            <person name="James K.D."/>
            <person name="Jones L."/>
            <person name="Jones M."/>
            <person name="Leather S."/>
            <person name="McDonald S."/>
            <person name="McLean J."/>
            <person name="Mooney P."/>
            <person name="Moule S."/>
            <person name="Mungall K.L."/>
            <person name="Murphy L.D."/>
            <person name="Niblett D."/>
            <person name="Odell C."/>
            <person name="Oliver K."/>
            <person name="O'Neil S."/>
            <person name="Pearson D."/>
            <person name="Quail M.A."/>
            <person name="Rabbinowitsch E."/>
            <person name="Rutherford K.M."/>
            <person name="Rutter S."/>
            <person name="Saunders D."/>
            <person name="Seeger K."/>
            <person name="Sharp S."/>
            <person name="Skelton J."/>
            <person name="Simmonds M.N."/>
            <person name="Squares R."/>
            <person name="Squares S."/>
            <person name="Stevens K."/>
            <person name="Taylor K."/>
            <person name="Taylor R.G."/>
            <person name="Tivey A."/>
            <person name="Walsh S.V."/>
            <person name="Warren T."/>
            <person name="Whitehead S."/>
            <person name="Woodward J.R."/>
            <person name="Volckaert G."/>
            <person name="Aert R."/>
            <person name="Robben J."/>
            <person name="Grymonprez B."/>
            <person name="Weltjens I."/>
            <person name="Vanstreels E."/>
            <person name="Rieger M."/>
            <person name="Schaefer M."/>
            <person name="Mueller-Auer S."/>
            <person name="Gabel C."/>
            <person name="Fuchs M."/>
            <person name="Duesterhoeft A."/>
            <person name="Fritzc C."/>
            <person name="Holzer E."/>
            <person name="Moestl D."/>
            <person name="Hilbert H."/>
            <person name="Borzym K."/>
            <person name="Langer I."/>
            <person name="Beck A."/>
            <person name="Lehrach H."/>
            <person name="Reinhardt R."/>
            <person name="Pohl T.M."/>
            <person name="Eger P."/>
            <person name="Zimmermann W."/>
            <person name="Wedler H."/>
            <person name="Wambutt R."/>
            <person name="Purnelle B."/>
            <person name="Goffeau A."/>
            <person name="Cadieu E."/>
            <person name="Dreano S."/>
            <person name="Gloux S."/>
            <person name="Lelaure V."/>
            <person name="Mottier S."/>
            <person name="Galibert F."/>
            <person name="Aves S.J."/>
            <person name="Xiang Z."/>
            <person name="Hunt C."/>
            <person name="Moore K."/>
            <person name="Hurst S.M."/>
            <person name="Lucas M."/>
            <person name="Rochet M."/>
            <person name="Gaillardin C."/>
            <person name="Tallada V.A."/>
            <person name="Garzon A."/>
            <person name="Thode G."/>
            <person name="Daga R.R."/>
            <person name="Cruzado L."/>
            <person name="Jimenez J."/>
            <person name="Sanchez M."/>
            <person name="del Rey F."/>
            <person name="Benito J."/>
            <person name="Dominguez A."/>
            <person name="Revuelta J.L."/>
            <person name="Moreno S."/>
            <person name="Armstrong J."/>
            <person name="Forsburg S.L."/>
            <person name="Cerutti L."/>
            <person name="Lowe T."/>
            <person name="McCombie W.R."/>
            <person name="Paulsen I."/>
            <person name="Potashkin J."/>
            <person name="Shpakovski G.V."/>
            <person name="Ussery D."/>
            <person name="Barrell B.G."/>
            <person name="Nurse P."/>
        </authorList>
    </citation>
    <scope>NUCLEOTIDE SEQUENCE [LARGE SCALE GENOMIC DNA]</scope>
    <source>
        <strain>972 / ATCC 24843</strain>
    </source>
</reference>
<reference key="2">
    <citation type="journal article" date="2006" name="Nat. Biotechnol.">
        <title>ORFeome cloning and global analysis of protein localization in the fission yeast Schizosaccharomyces pombe.</title>
        <authorList>
            <person name="Matsuyama A."/>
            <person name="Arai R."/>
            <person name="Yashiroda Y."/>
            <person name="Shirai A."/>
            <person name="Kamata A."/>
            <person name="Sekido S."/>
            <person name="Kobayashi Y."/>
            <person name="Hashimoto A."/>
            <person name="Hamamoto M."/>
            <person name="Hiraoka Y."/>
            <person name="Horinouchi S."/>
            <person name="Yoshida M."/>
        </authorList>
    </citation>
    <scope>SUBCELLULAR LOCATION [LARGE SCALE ANALYSIS]</scope>
</reference>
<evidence type="ECO:0000269" key="1">
    <source>
    </source>
</evidence>
<keyword id="KW-0963">Cytoplasm</keyword>
<keyword id="KW-0539">Nucleus</keyword>
<keyword id="KW-1185">Reference proteome</keyword>
<protein>
    <recommendedName>
        <fullName>Uncharacterized protein C1A4.11c</fullName>
    </recommendedName>
</protein>
<comment type="subcellular location">
    <subcellularLocation>
        <location evidence="1">Cytoplasm</location>
    </subcellularLocation>
    <subcellularLocation>
        <location evidence="1">Nucleus</location>
    </subcellularLocation>
</comment>
<organism>
    <name type="scientific">Schizosaccharomyces pombe (strain 972 / ATCC 24843)</name>
    <name type="common">Fission yeast</name>
    <dbReference type="NCBI Taxonomy" id="284812"/>
    <lineage>
        <taxon>Eukaryota</taxon>
        <taxon>Fungi</taxon>
        <taxon>Dikarya</taxon>
        <taxon>Ascomycota</taxon>
        <taxon>Taphrinomycotina</taxon>
        <taxon>Schizosaccharomycetes</taxon>
        <taxon>Schizosaccharomycetales</taxon>
        <taxon>Schizosaccharomycetaceae</taxon>
        <taxon>Schizosaccharomyces</taxon>
    </lineage>
</organism>
<feature type="chain" id="PRO_0000304081" description="Uncharacterized protein C1A4.11c">
    <location>
        <begin position="1"/>
        <end position="124"/>
    </location>
</feature>
<sequence length="124" mass="14223">MPEKDWIGEFGPSKFKSPIDKLNQLLPESNDPSILYETSQHLLSEFDKTLNDSLRVLNQQINQVSEVLPRLPTMISALDRESKRLFESCEKMDPEPSALMPLQELEKIRSNIQLTISQIDNLTP</sequence>
<accession>O74342</accession>
<dbReference type="EMBL" id="CU329671">
    <property type="protein sequence ID" value="CAA20113.1"/>
    <property type="molecule type" value="Genomic_DNA"/>
</dbReference>
<dbReference type="PIR" id="T39857">
    <property type="entry name" value="T39857"/>
</dbReference>
<dbReference type="RefSeq" id="NP_595811.1">
    <property type="nucleotide sequence ID" value="NM_001021714.2"/>
</dbReference>
<dbReference type="SMR" id="O74342"/>
<dbReference type="STRING" id="284812.O74342"/>
<dbReference type="iPTMnet" id="O74342"/>
<dbReference type="PaxDb" id="4896-SPBC1A4.11c.1"/>
<dbReference type="EnsemblFungi" id="SPBC1A4.11c.1">
    <property type="protein sequence ID" value="SPBC1A4.11c.1:pep"/>
    <property type="gene ID" value="SPBC1A4.11c"/>
</dbReference>
<dbReference type="KEGG" id="spo:2540658"/>
<dbReference type="PomBase" id="SPBC1A4.11c"/>
<dbReference type="VEuPathDB" id="FungiDB:SPBC1A4.11c"/>
<dbReference type="HOGENOM" id="CLU_2005243_0_0_1"/>
<dbReference type="InParanoid" id="O74342"/>
<dbReference type="OMA" id="WIDEFHP"/>
<dbReference type="PRO" id="PR:O74342"/>
<dbReference type="Proteomes" id="UP000002485">
    <property type="component" value="Chromosome II"/>
</dbReference>
<dbReference type="GO" id="GO:0005829">
    <property type="term" value="C:cytosol"/>
    <property type="evidence" value="ECO:0007005"/>
    <property type="project" value="PomBase"/>
</dbReference>
<dbReference type="GO" id="GO:0005634">
    <property type="term" value="C:nucleus"/>
    <property type="evidence" value="ECO:0007005"/>
    <property type="project" value="PomBase"/>
</dbReference>
<gene>
    <name type="ORF">SPBC1A4.09c</name>
    <name type="ORF">SPBC1A4.11c</name>
</gene>